<proteinExistence type="inferred from homology"/>
<name>INO1_MYCTO</name>
<keyword id="KW-0398">Inositol biosynthesis</keyword>
<keyword id="KW-0413">Isomerase</keyword>
<keyword id="KW-0520">NAD</keyword>
<keyword id="KW-1185">Reference proteome</keyword>
<reference key="1">
    <citation type="journal article" date="2002" name="J. Bacteriol.">
        <title>Whole-genome comparison of Mycobacterium tuberculosis clinical and laboratory strains.</title>
        <authorList>
            <person name="Fleischmann R.D."/>
            <person name="Alland D."/>
            <person name="Eisen J.A."/>
            <person name="Carpenter L."/>
            <person name="White O."/>
            <person name="Peterson J.D."/>
            <person name="DeBoy R.T."/>
            <person name="Dodson R.J."/>
            <person name="Gwinn M.L."/>
            <person name="Haft D.H."/>
            <person name="Hickey E.K."/>
            <person name="Kolonay J.F."/>
            <person name="Nelson W.C."/>
            <person name="Umayam L.A."/>
            <person name="Ermolaeva M.D."/>
            <person name="Salzberg S.L."/>
            <person name="Delcher A."/>
            <person name="Utterback T.R."/>
            <person name="Weidman J.F."/>
            <person name="Khouri H.M."/>
            <person name="Gill J."/>
            <person name="Mikula A."/>
            <person name="Bishai W."/>
            <person name="Jacobs W.R. Jr."/>
            <person name="Venter J.C."/>
            <person name="Fraser C.M."/>
        </authorList>
    </citation>
    <scope>NUCLEOTIDE SEQUENCE [LARGE SCALE GENOMIC DNA]</scope>
    <source>
        <strain>CDC 1551 / Oshkosh</strain>
    </source>
</reference>
<gene>
    <name type="primary">ino1</name>
    <name type="ordered locus">MT0052</name>
</gene>
<sequence>MSEHQSLPAPEASTEVRVAIVGVGNCASSLVQGVEYYYNADDTSTVPGLMHVRFGPYHVRDVKFVAAFDVDAKKVGFDLSDAIFASENNTIKIADVAPTNVIVQRGPTLDGIGKYYADTIELSDAEPVDVVQALKEAKVDVLVSYLPVGSEEADKFYAQCAIDAGVAFVNALPVFIASDPVWAKKFTDAGVPIVGDDIKSQVGATITHRVLAKLFEDRGVQLDRTMQLNVGGNMDFLNMLERERLESKKISKTQAVTSNLKREFKTKDVHIGPSDHVGWLDDRKWAYVRLEGRAFGDVPLNLEYKLEVWDSPNSAGVIIDAVRAAKIAKDRGIGGPVIPASAYLMKSPPEQLPDDIARAQLEEFIIG</sequence>
<feature type="chain" id="PRO_0000427650" description="Inositol-3-phosphate synthase">
    <location>
        <begin position="1"/>
        <end position="367"/>
    </location>
</feature>
<feature type="binding site" evidence="1">
    <location>
        <position position="78"/>
    </location>
    <ligand>
        <name>NAD(+)</name>
        <dbReference type="ChEBI" id="CHEBI:57540"/>
    </ligand>
</feature>
<feature type="binding site" evidence="1">
    <location>
        <position position="137"/>
    </location>
    <ligand>
        <name>NAD(+)</name>
        <dbReference type="ChEBI" id="CHEBI:57540"/>
    </ligand>
</feature>
<feature type="binding site" evidence="1">
    <location>
        <position position="157"/>
    </location>
    <ligand>
        <name>NAD(+)</name>
        <dbReference type="ChEBI" id="CHEBI:57540"/>
    </ligand>
</feature>
<feature type="binding site" evidence="1">
    <location>
        <position position="200"/>
    </location>
    <ligand>
        <name>NAD(+)</name>
        <dbReference type="ChEBI" id="CHEBI:57540"/>
    </ligand>
</feature>
<feature type="binding site" evidence="1">
    <location>
        <position position="235"/>
    </location>
    <ligand>
        <name>NAD(+)</name>
        <dbReference type="ChEBI" id="CHEBI:57540"/>
    </ligand>
</feature>
<feature type="binding site" evidence="1">
    <location>
        <position position="248"/>
    </location>
    <ligand>
        <name>NAD(+)</name>
        <dbReference type="ChEBI" id="CHEBI:57540"/>
    </ligand>
</feature>
<protein>
    <recommendedName>
        <fullName>Inositol-3-phosphate synthase</fullName>
        <shortName>IPS</shortName>
        <ecNumber evidence="1">5.5.1.4</ecNumber>
    </recommendedName>
    <alternativeName>
        <fullName>Myo-inositol 1-phosphate synthase</fullName>
        <shortName>MI-1-P synthase</shortName>
        <shortName>MIP synthase</shortName>
    </alternativeName>
</protein>
<dbReference type="EC" id="5.5.1.4" evidence="1"/>
<dbReference type="EMBL" id="AE000516">
    <property type="protein sequence ID" value="AAK44274.1"/>
    <property type="molecule type" value="Genomic_DNA"/>
</dbReference>
<dbReference type="PIR" id="F70912">
    <property type="entry name" value="F70912"/>
</dbReference>
<dbReference type="RefSeq" id="WP_003400492.1">
    <property type="nucleotide sequence ID" value="NZ_KK341227.1"/>
</dbReference>
<dbReference type="SMR" id="P9WKI0"/>
<dbReference type="KEGG" id="mtc:MT0052"/>
<dbReference type="PATRIC" id="fig|83331.31.peg.52"/>
<dbReference type="HOGENOM" id="CLU_050011_0_0_11"/>
<dbReference type="Proteomes" id="UP000001020">
    <property type="component" value="Chromosome"/>
</dbReference>
<dbReference type="GO" id="GO:0004512">
    <property type="term" value="F:inositol-3-phosphate synthase activity"/>
    <property type="evidence" value="ECO:0007669"/>
    <property type="project" value="UniProtKB-EC"/>
</dbReference>
<dbReference type="GO" id="GO:0006021">
    <property type="term" value="P:inositol biosynthetic process"/>
    <property type="evidence" value="ECO:0007669"/>
    <property type="project" value="UniProtKB-KW"/>
</dbReference>
<dbReference type="GO" id="GO:0008654">
    <property type="term" value="P:phospholipid biosynthetic process"/>
    <property type="evidence" value="ECO:0007669"/>
    <property type="project" value="InterPro"/>
</dbReference>
<dbReference type="Gene3D" id="3.30.360.10">
    <property type="entry name" value="Dihydrodipicolinate Reductase, domain 2"/>
    <property type="match status" value="1"/>
</dbReference>
<dbReference type="Gene3D" id="3.40.50.720">
    <property type="entry name" value="NAD(P)-binding Rossmann-like Domain"/>
    <property type="match status" value="1"/>
</dbReference>
<dbReference type="InterPro" id="IPR052199">
    <property type="entry name" value="MIPS"/>
</dbReference>
<dbReference type="InterPro" id="IPR002587">
    <property type="entry name" value="Myo-inos-1-P_Synthase"/>
</dbReference>
<dbReference type="InterPro" id="IPR017815">
    <property type="entry name" value="Myo-inos-1-P_Synthase_actino"/>
</dbReference>
<dbReference type="InterPro" id="IPR013021">
    <property type="entry name" value="Myo-inos-1-P_Synthase_GAPDH"/>
</dbReference>
<dbReference type="InterPro" id="IPR036291">
    <property type="entry name" value="NAD(P)-bd_dom_sf"/>
</dbReference>
<dbReference type="NCBIfam" id="TIGR03450">
    <property type="entry name" value="mycothiol_INO1"/>
    <property type="match status" value="1"/>
</dbReference>
<dbReference type="PANTHER" id="PTHR43125">
    <property type="entry name" value="INOSITOL-3-PHOSPHATE SYNTHASE"/>
    <property type="match status" value="1"/>
</dbReference>
<dbReference type="PANTHER" id="PTHR43125:SF1">
    <property type="entry name" value="INOSITOL-3-PHOSPHATE SYNTHASE"/>
    <property type="match status" value="1"/>
</dbReference>
<dbReference type="Pfam" id="PF01658">
    <property type="entry name" value="Inos-1-P_synth"/>
    <property type="match status" value="1"/>
</dbReference>
<dbReference type="PIRSF" id="PIRSF015578">
    <property type="entry name" value="Myoinos-ppht_syn"/>
    <property type="match status" value="1"/>
</dbReference>
<dbReference type="SUPFAM" id="SSF55347">
    <property type="entry name" value="Glyceraldehyde-3-phosphate dehydrogenase-like, C-terminal domain"/>
    <property type="match status" value="1"/>
</dbReference>
<dbReference type="SUPFAM" id="SSF51735">
    <property type="entry name" value="NAD(P)-binding Rossmann-fold domains"/>
    <property type="match status" value="1"/>
</dbReference>
<accession>P9WKI0</accession>
<accession>L0T457</accession>
<accession>P71703</accession>
<evidence type="ECO:0000250" key="1">
    <source>
        <dbReference type="UniProtKB" id="Q8A7J8"/>
    </source>
</evidence>
<evidence type="ECO:0000305" key="2"/>
<comment type="function">
    <text evidence="1">Key enzyme in myo-inositol biosynthesis pathway that catalyzes the conversion of glucose 6-phosphate to 1D-myo-inositol 3-phosphate in a NAD-dependent manner.</text>
</comment>
<comment type="catalytic activity">
    <reaction evidence="1">
        <text>D-glucose 6-phosphate = 1D-myo-inositol 3-phosphate</text>
        <dbReference type="Rhea" id="RHEA:10716"/>
        <dbReference type="ChEBI" id="CHEBI:58401"/>
        <dbReference type="ChEBI" id="CHEBI:61548"/>
        <dbReference type="EC" id="5.5.1.4"/>
    </reaction>
</comment>
<comment type="cofactor">
    <cofactor evidence="1">
        <name>NAD(+)</name>
        <dbReference type="ChEBI" id="CHEBI:57540"/>
    </cofactor>
</comment>
<comment type="similarity">
    <text evidence="2">Belongs to the myo-inositol 1-phosphate synthase family.</text>
</comment>
<organism>
    <name type="scientific">Mycobacterium tuberculosis (strain CDC 1551 / Oshkosh)</name>
    <dbReference type="NCBI Taxonomy" id="83331"/>
    <lineage>
        <taxon>Bacteria</taxon>
        <taxon>Bacillati</taxon>
        <taxon>Actinomycetota</taxon>
        <taxon>Actinomycetes</taxon>
        <taxon>Mycobacteriales</taxon>
        <taxon>Mycobacteriaceae</taxon>
        <taxon>Mycobacterium</taxon>
        <taxon>Mycobacterium tuberculosis complex</taxon>
    </lineage>
</organism>